<evidence type="ECO:0000269" key="1">
    <source>
    </source>
</evidence>
<evidence type="ECO:0000305" key="2"/>
<comment type="function">
    <text evidence="1">Plays a role in the inhibition of host protein synthesis. Specifically, inhibits the initiation of cap-dependent and cap-independent translation. In turn, affects the outcome of infection by decreasing recruitment of inflammatory leukocytes and reducing the memory CD8+ T-cell response.</text>
</comment>
<comment type="subcellular location">
    <subcellularLocation>
        <location evidence="1">Host cytoplasm</location>
    </subcellularLocation>
    <text evidence="1">Localizes in cytoplasmic structures that differ from virus factories.</text>
</comment>
<comment type="induction">
    <text>Expressed in the early phase of the viral replicative cycle.</text>
</comment>
<comment type="similarity">
    <text evidence="2">Belongs to the orthopoxvirus OPG173 protein family.</text>
</comment>
<feature type="chain" id="PRO_0000412176" description="Protein OPG173">
    <location>
        <begin position="1"/>
        <end position="78"/>
    </location>
</feature>
<dbReference type="EMBL" id="AY243312">
    <property type="protein sequence ID" value="AAO89448.1"/>
    <property type="molecule type" value="Genomic_DNA"/>
</dbReference>
<dbReference type="PIR" id="JQ1781">
    <property type="entry name" value="JQ1781"/>
</dbReference>
<dbReference type="RefSeq" id="YP_233051.1">
    <property type="nucleotide sequence ID" value="NC_006998.1"/>
</dbReference>
<dbReference type="DNASU" id="3707699"/>
<dbReference type="GeneID" id="3707699"/>
<dbReference type="KEGG" id="vg:3707699"/>
<dbReference type="Proteomes" id="UP000000344">
    <property type="component" value="Genome"/>
</dbReference>
<dbReference type="GO" id="GO:0030430">
    <property type="term" value="C:host cell cytoplasm"/>
    <property type="evidence" value="ECO:0000314"/>
    <property type="project" value="UniProtKB"/>
</dbReference>
<dbReference type="GO" id="GO:0039504">
    <property type="term" value="P:symbiont-mediated suppression of host adaptive immune response"/>
    <property type="evidence" value="ECO:0000314"/>
    <property type="project" value="UniProtKB"/>
</dbReference>
<dbReference type="GO" id="GO:0039657">
    <property type="term" value="P:symbiont-mediated suppression of host gene expression"/>
    <property type="evidence" value="ECO:0007669"/>
    <property type="project" value="UniProtKB-KW"/>
</dbReference>
<dbReference type="GO" id="GO:0039604">
    <property type="term" value="P:symbiont-mediated suppression of host translation"/>
    <property type="evidence" value="ECO:0000314"/>
    <property type="project" value="UniProtKB"/>
</dbReference>
<dbReference type="GO" id="GO:0039606">
    <property type="term" value="P:symbiont-mediated suppression of host translation initiation"/>
    <property type="evidence" value="ECO:0007669"/>
    <property type="project" value="UniProtKB-KW"/>
</dbReference>
<keyword id="KW-0244">Early protein</keyword>
<keyword id="KW-1262">Eukaryotic host gene expression shutoff by virus</keyword>
<keyword id="KW-1193">Eukaryotic host translation shutoff by virus</keyword>
<keyword id="KW-1035">Host cytoplasm</keyword>
<keyword id="KW-1190">Host gene expression shutoff by virus</keyword>
<keyword id="KW-0945">Host-virus interaction</keyword>
<keyword id="KW-1075">Inhibition of eukaryotic host translation factors by virus</keyword>
<keyword id="KW-1080">Inhibition of host adaptive immune response by virus</keyword>
<keyword id="KW-1185">Reference proteome</keyword>
<keyword id="KW-0899">Viral immunoevasion</keyword>
<gene>
    <name type="primary">OPG173</name>
    <name type="ordered locus">VACWR169</name>
</gene>
<name>PG173_VACCW</name>
<protein>
    <recommendedName>
        <fullName>Protein OPG173</fullName>
    </recommendedName>
</protein>
<organism>
    <name type="scientific">Vaccinia virus (strain Western Reserve)</name>
    <name type="common">VACV</name>
    <name type="synonym">Vaccinia virus (strain WR)</name>
    <dbReference type="NCBI Taxonomy" id="10254"/>
    <lineage>
        <taxon>Viruses</taxon>
        <taxon>Varidnaviria</taxon>
        <taxon>Bamfordvirae</taxon>
        <taxon>Nucleocytoviricota</taxon>
        <taxon>Pokkesviricetes</taxon>
        <taxon>Chitovirales</taxon>
        <taxon>Poxviridae</taxon>
        <taxon>Chordopoxvirinae</taxon>
        <taxon>Orthopoxvirus</taxon>
        <taxon>Vaccinia virus</taxon>
    </lineage>
</organism>
<organismHost>
    <name type="scientific">Bos taurus</name>
    <name type="common">Bovine</name>
    <dbReference type="NCBI Taxonomy" id="9913"/>
</organismHost>
<sequence length="78" mass="8778">MLLEMDKIKITVDSKIGNVVTISYNLEKITIDVTPKKKKEKDVLLAQSVAVEEAKDVKVEEKNIIDIEDDDDMDVESA</sequence>
<proteinExistence type="evidence at transcript level"/>
<accession>Q80HU0</accession>
<reference key="1">
    <citation type="submission" date="2003-02" db="EMBL/GenBank/DDBJ databases">
        <title>Sequencing of the coding region of Vaccinia-WR to an average 9-fold redundancy and an error rate of 0.16/10kb.</title>
        <authorList>
            <person name="Esposito J.J."/>
            <person name="Frace A.M."/>
            <person name="Sammons S.A."/>
            <person name="Olsen-Rasmussen M."/>
            <person name="Osborne J."/>
            <person name="Wohlhueter R."/>
        </authorList>
    </citation>
    <scope>NUCLEOTIDE SEQUENCE [LARGE SCALE GENOMIC DNA]</scope>
</reference>
<reference key="2">
    <citation type="journal article" date="2015" name="PLoS Pathog.">
        <title>Inhibition of Translation Initiation by Protein 169: A Vaccinia Virus Strategy to Suppress Innate and Adaptive Immunity and Alter Virus Virulence.</title>
        <authorList>
            <person name="Strnadova P."/>
            <person name="Ren H."/>
            <person name="Valentine R."/>
            <person name="Mazzon M."/>
            <person name="Sweeney T.R."/>
            <person name="Brierley I."/>
            <person name="Smith G.L."/>
        </authorList>
    </citation>
    <scope>FUNCTION</scope>
    <scope>SUBCELLULAR LOCATION</scope>
</reference>